<protein>
    <recommendedName>
        <fullName evidence="1">Nod factor export ATP-binding protein I</fullName>
        <ecNumber evidence="1">7.6.2.-</ecNumber>
    </recommendedName>
    <alternativeName>
        <fullName evidence="1">Nodulation ATP-binding protein I</fullName>
    </alternativeName>
</protein>
<sequence length="304" mass="33556">MSVAPIDFRNVEKRYGDKLVVNGLSFSVKVGECYGLLGPNGAGKTTTLKMLLGLAHPDAGTISLCGEPVPSRARHARQRVGVVPQFDNLDPDFTVRENLLVFSRYFGMSAQAARALVAPLLEFAKLENKADAKVGELSGGMKRRLTLARALVNDPDVLVLDEPTTGLDPQARHLMWERLRSLLARGKTILITTHFMEEAERLCDRLCVIEEGRKIAEGAPHALIESEIGCDVIEIYGPDPAALRDELSAFAKHTEISGETLFCYVIDPEPLTARLKGRPGLRYLHRPANLEDVFLRLTGREMQD</sequence>
<gene>
    <name evidence="1" type="primary">nodI</name>
    <name type="ordered locus">Bcen_1116</name>
</gene>
<reference key="1">
    <citation type="submission" date="2006-05" db="EMBL/GenBank/DDBJ databases">
        <title>Complete sequence of chromosome 1 of Burkholderia cenocepacia AU 1054.</title>
        <authorList>
            <consortium name="US DOE Joint Genome Institute"/>
            <person name="Copeland A."/>
            <person name="Lucas S."/>
            <person name="Lapidus A."/>
            <person name="Barry K."/>
            <person name="Detter J.C."/>
            <person name="Glavina del Rio T."/>
            <person name="Hammon N."/>
            <person name="Israni S."/>
            <person name="Dalin E."/>
            <person name="Tice H."/>
            <person name="Pitluck S."/>
            <person name="Chain P."/>
            <person name="Malfatti S."/>
            <person name="Shin M."/>
            <person name="Vergez L."/>
            <person name="Schmutz J."/>
            <person name="Larimer F."/>
            <person name="Land M."/>
            <person name="Hauser L."/>
            <person name="Kyrpides N."/>
            <person name="Lykidis A."/>
            <person name="LiPuma J.J."/>
            <person name="Konstantinidis K."/>
            <person name="Tiedje J.M."/>
            <person name="Richardson P."/>
        </authorList>
    </citation>
    <scope>NUCLEOTIDE SEQUENCE [LARGE SCALE GENOMIC DNA]</scope>
    <source>
        <strain>AU 1054</strain>
    </source>
</reference>
<proteinExistence type="inferred from homology"/>
<comment type="function">
    <text evidence="1">Part of the ABC transporter complex NodIJ involved in the export of the nodulation factors (Nod factors), the bacterial signal molecules that induce symbiosis and subsequent nodulation induction. Nod factors are LCO (lipo-chitin oligosaccharide), a modified beta-1,4-linked N-acetylglucosamine oligosaccharide. This subunit is responsible for energy coupling to the transport system.</text>
</comment>
<comment type="subunit">
    <text evidence="1">The complex is composed of two ATP-binding proteins (NodI) and two transmembrane proteins (NodJ).</text>
</comment>
<comment type="subcellular location">
    <subcellularLocation>
        <location evidence="1">Cell inner membrane</location>
        <topology evidence="1">Peripheral membrane protein</topology>
    </subcellularLocation>
</comment>
<comment type="similarity">
    <text evidence="1">Belongs to the ABC transporter superfamily. Lipooligosaccharide exporter (TC 3.A.1.102) family.</text>
</comment>
<evidence type="ECO:0000255" key="1">
    <source>
        <dbReference type="HAMAP-Rule" id="MF_01704"/>
    </source>
</evidence>
<name>NODI_BURO1</name>
<keyword id="KW-0067">ATP-binding</keyword>
<keyword id="KW-0997">Cell inner membrane</keyword>
<keyword id="KW-1003">Cell membrane</keyword>
<keyword id="KW-0472">Membrane</keyword>
<keyword id="KW-0536">Nodulation</keyword>
<keyword id="KW-0547">Nucleotide-binding</keyword>
<keyword id="KW-1278">Translocase</keyword>
<keyword id="KW-0813">Transport</keyword>
<organism>
    <name type="scientific">Burkholderia orbicola (strain AU 1054)</name>
    <dbReference type="NCBI Taxonomy" id="331271"/>
    <lineage>
        <taxon>Bacteria</taxon>
        <taxon>Pseudomonadati</taxon>
        <taxon>Pseudomonadota</taxon>
        <taxon>Betaproteobacteria</taxon>
        <taxon>Burkholderiales</taxon>
        <taxon>Burkholderiaceae</taxon>
        <taxon>Burkholderia</taxon>
        <taxon>Burkholderia cepacia complex</taxon>
        <taxon>Burkholderia orbicola</taxon>
    </lineage>
</organism>
<feature type="chain" id="PRO_0000272595" description="Nod factor export ATP-binding protein I">
    <location>
        <begin position="1"/>
        <end position="304"/>
    </location>
</feature>
<feature type="domain" description="ABC transporter" evidence="1">
    <location>
        <begin position="6"/>
        <end position="236"/>
    </location>
</feature>
<feature type="binding site" evidence="1">
    <location>
        <begin position="38"/>
        <end position="45"/>
    </location>
    <ligand>
        <name>ATP</name>
        <dbReference type="ChEBI" id="CHEBI:30616"/>
    </ligand>
</feature>
<dbReference type="EC" id="7.6.2.-" evidence="1"/>
<dbReference type="EMBL" id="CP000378">
    <property type="protein sequence ID" value="ABF76023.1"/>
    <property type="molecule type" value="Genomic_DNA"/>
</dbReference>
<dbReference type="SMR" id="Q1BWI2"/>
<dbReference type="HOGENOM" id="CLU_000604_1_2_4"/>
<dbReference type="GO" id="GO:0005886">
    <property type="term" value="C:plasma membrane"/>
    <property type="evidence" value="ECO:0007669"/>
    <property type="project" value="UniProtKB-SubCell"/>
</dbReference>
<dbReference type="GO" id="GO:0005524">
    <property type="term" value="F:ATP binding"/>
    <property type="evidence" value="ECO:0007669"/>
    <property type="project" value="UniProtKB-KW"/>
</dbReference>
<dbReference type="GO" id="GO:0016887">
    <property type="term" value="F:ATP hydrolysis activity"/>
    <property type="evidence" value="ECO:0007669"/>
    <property type="project" value="InterPro"/>
</dbReference>
<dbReference type="GO" id="GO:0022857">
    <property type="term" value="F:transmembrane transporter activity"/>
    <property type="evidence" value="ECO:0007669"/>
    <property type="project" value="InterPro"/>
</dbReference>
<dbReference type="CDD" id="cd03230">
    <property type="entry name" value="ABC_DR_subfamily_A"/>
    <property type="match status" value="1"/>
</dbReference>
<dbReference type="FunFam" id="3.40.50.300:FF:000589">
    <property type="entry name" value="ABC transporter, ATP-binding subunit"/>
    <property type="match status" value="1"/>
</dbReference>
<dbReference type="Gene3D" id="3.40.50.300">
    <property type="entry name" value="P-loop containing nucleotide triphosphate hydrolases"/>
    <property type="match status" value="1"/>
</dbReference>
<dbReference type="InterPro" id="IPR003593">
    <property type="entry name" value="AAA+_ATPase"/>
</dbReference>
<dbReference type="InterPro" id="IPR003439">
    <property type="entry name" value="ABC_transporter-like_ATP-bd"/>
</dbReference>
<dbReference type="InterPro" id="IPR017871">
    <property type="entry name" value="ABC_transporter-like_CS"/>
</dbReference>
<dbReference type="InterPro" id="IPR050763">
    <property type="entry name" value="ABC_transporter_ATP-binding"/>
</dbReference>
<dbReference type="InterPro" id="IPR005978">
    <property type="entry name" value="ABC_transptNodI"/>
</dbReference>
<dbReference type="InterPro" id="IPR027417">
    <property type="entry name" value="P-loop_NTPase"/>
</dbReference>
<dbReference type="NCBIfam" id="TIGR01288">
    <property type="entry name" value="nodI"/>
    <property type="match status" value="1"/>
</dbReference>
<dbReference type="NCBIfam" id="NF010060">
    <property type="entry name" value="PRK13537.1"/>
    <property type="match status" value="1"/>
</dbReference>
<dbReference type="PANTHER" id="PTHR42711">
    <property type="entry name" value="ABC TRANSPORTER ATP-BINDING PROTEIN"/>
    <property type="match status" value="1"/>
</dbReference>
<dbReference type="PANTHER" id="PTHR42711:SF5">
    <property type="entry name" value="ABC TRANSPORTER ATP-BINDING PROTEIN NATA"/>
    <property type="match status" value="1"/>
</dbReference>
<dbReference type="Pfam" id="PF00005">
    <property type="entry name" value="ABC_tran"/>
    <property type="match status" value="1"/>
</dbReference>
<dbReference type="SMART" id="SM00382">
    <property type="entry name" value="AAA"/>
    <property type="match status" value="1"/>
</dbReference>
<dbReference type="SUPFAM" id="SSF52540">
    <property type="entry name" value="P-loop containing nucleoside triphosphate hydrolases"/>
    <property type="match status" value="1"/>
</dbReference>
<dbReference type="PROSITE" id="PS00211">
    <property type="entry name" value="ABC_TRANSPORTER_1"/>
    <property type="match status" value="1"/>
</dbReference>
<dbReference type="PROSITE" id="PS50893">
    <property type="entry name" value="ABC_TRANSPORTER_2"/>
    <property type="match status" value="1"/>
</dbReference>
<dbReference type="PROSITE" id="PS51240">
    <property type="entry name" value="NODI"/>
    <property type="match status" value="1"/>
</dbReference>
<accession>Q1BWI2</accession>